<feature type="chain" id="PRO_0000273890" description="Large ribosomal subunit protein uL30">
    <location>
        <begin position="1"/>
        <end position="63"/>
    </location>
</feature>
<proteinExistence type="inferred from homology"/>
<organism>
    <name type="scientific">Xanthomonas axonopodis pv. citri (strain 306)</name>
    <dbReference type="NCBI Taxonomy" id="190486"/>
    <lineage>
        <taxon>Bacteria</taxon>
        <taxon>Pseudomonadati</taxon>
        <taxon>Pseudomonadota</taxon>
        <taxon>Gammaproteobacteria</taxon>
        <taxon>Lysobacterales</taxon>
        <taxon>Lysobacteraceae</taxon>
        <taxon>Xanthomonas</taxon>
    </lineage>
</organism>
<sequence length="63" mass="7207">MAKDTNKTVKVRLVRGLRGTQSRHRLSVRALGLNKLNDVRELKDSPQVRGLINTVHYLVKVEE</sequence>
<keyword id="KW-0687">Ribonucleoprotein</keyword>
<keyword id="KW-0689">Ribosomal protein</keyword>
<name>RL30_XANAC</name>
<gene>
    <name evidence="1" type="primary">rpmD</name>
    <name type="ordered locus">XAC0990</name>
</gene>
<reference key="1">
    <citation type="journal article" date="2002" name="Nature">
        <title>Comparison of the genomes of two Xanthomonas pathogens with differing host specificities.</title>
        <authorList>
            <person name="da Silva A.C.R."/>
            <person name="Ferro J.A."/>
            <person name="Reinach F.C."/>
            <person name="Farah C.S."/>
            <person name="Furlan L.R."/>
            <person name="Quaggio R.B."/>
            <person name="Monteiro-Vitorello C.B."/>
            <person name="Van Sluys M.A."/>
            <person name="Almeida N.F. Jr."/>
            <person name="Alves L.M.C."/>
            <person name="do Amaral A.M."/>
            <person name="Bertolini M.C."/>
            <person name="Camargo L.E.A."/>
            <person name="Camarotte G."/>
            <person name="Cannavan F."/>
            <person name="Cardozo J."/>
            <person name="Chambergo F."/>
            <person name="Ciapina L.P."/>
            <person name="Cicarelli R.M.B."/>
            <person name="Coutinho L.L."/>
            <person name="Cursino-Santos J.R."/>
            <person name="El-Dorry H."/>
            <person name="Faria J.B."/>
            <person name="Ferreira A.J.S."/>
            <person name="Ferreira R.C.C."/>
            <person name="Ferro M.I.T."/>
            <person name="Formighieri E.F."/>
            <person name="Franco M.C."/>
            <person name="Greggio C.C."/>
            <person name="Gruber A."/>
            <person name="Katsuyama A.M."/>
            <person name="Kishi L.T."/>
            <person name="Leite R.P."/>
            <person name="Lemos E.G.M."/>
            <person name="Lemos M.V.F."/>
            <person name="Locali E.C."/>
            <person name="Machado M.A."/>
            <person name="Madeira A.M.B.N."/>
            <person name="Martinez-Rossi N.M."/>
            <person name="Martins E.C."/>
            <person name="Meidanis J."/>
            <person name="Menck C.F.M."/>
            <person name="Miyaki C.Y."/>
            <person name="Moon D.H."/>
            <person name="Moreira L.M."/>
            <person name="Novo M.T.M."/>
            <person name="Okura V.K."/>
            <person name="Oliveira M.C."/>
            <person name="Oliveira V.R."/>
            <person name="Pereira H.A."/>
            <person name="Rossi A."/>
            <person name="Sena J.A.D."/>
            <person name="Silva C."/>
            <person name="de Souza R.F."/>
            <person name="Spinola L.A.F."/>
            <person name="Takita M.A."/>
            <person name="Tamura R.E."/>
            <person name="Teixeira E.C."/>
            <person name="Tezza R.I.D."/>
            <person name="Trindade dos Santos M."/>
            <person name="Truffi D."/>
            <person name="Tsai S.M."/>
            <person name="White F.F."/>
            <person name="Setubal J.C."/>
            <person name="Kitajima J.P."/>
        </authorList>
    </citation>
    <scope>NUCLEOTIDE SEQUENCE [LARGE SCALE GENOMIC DNA]</scope>
    <source>
        <strain>306</strain>
    </source>
</reference>
<comment type="subunit">
    <text evidence="1">Part of the 50S ribosomal subunit.</text>
</comment>
<comment type="similarity">
    <text evidence="1">Belongs to the universal ribosomal protein uL30 family.</text>
</comment>
<comment type="sequence caution" evidence="2">
    <conflict type="erroneous initiation">
        <sequence resource="EMBL-CDS" id="AAM35873"/>
    </conflict>
</comment>
<evidence type="ECO:0000255" key="1">
    <source>
        <dbReference type="HAMAP-Rule" id="MF_01371"/>
    </source>
</evidence>
<evidence type="ECO:0000305" key="2"/>
<accession>Q8PNR0</accession>
<dbReference type="EMBL" id="AE008923">
    <property type="protein sequence ID" value="AAM35873.1"/>
    <property type="status" value="ALT_INIT"/>
    <property type="molecule type" value="Genomic_DNA"/>
</dbReference>
<dbReference type="RefSeq" id="WP_003486678.1">
    <property type="nucleotide sequence ID" value="NC_003919.1"/>
</dbReference>
<dbReference type="SMR" id="Q8PNR0"/>
<dbReference type="GeneID" id="97509354"/>
<dbReference type="KEGG" id="xac:XAC0990"/>
<dbReference type="eggNOG" id="COG1841">
    <property type="taxonomic scope" value="Bacteria"/>
</dbReference>
<dbReference type="HOGENOM" id="CLU_131047_1_4_6"/>
<dbReference type="Proteomes" id="UP000000576">
    <property type="component" value="Chromosome"/>
</dbReference>
<dbReference type="GO" id="GO:0022625">
    <property type="term" value="C:cytosolic large ribosomal subunit"/>
    <property type="evidence" value="ECO:0007669"/>
    <property type="project" value="TreeGrafter"/>
</dbReference>
<dbReference type="GO" id="GO:0003735">
    <property type="term" value="F:structural constituent of ribosome"/>
    <property type="evidence" value="ECO:0007669"/>
    <property type="project" value="InterPro"/>
</dbReference>
<dbReference type="GO" id="GO:0006412">
    <property type="term" value="P:translation"/>
    <property type="evidence" value="ECO:0007669"/>
    <property type="project" value="UniProtKB-UniRule"/>
</dbReference>
<dbReference type="CDD" id="cd00355">
    <property type="entry name" value="Ribosomal_L30_like"/>
    <property type="match status" value="1"/>
</dbReference>
<dbReference type="FunFam" id="3.30.1390.20:FF:000006">
    <property type="entry name" value="50S ribosomal protein L30"/>
    <property type="match status" value="1"/>
</dbReference>
<dbReference type="Gene3D" id="3.30.1390.20">
    <property type="entry name" value="Ribosomal protein L30, ferredoxin-like fold domain"/>
    <property type="match status" value="1"/>
</dbReference>
<dbReference type="HAMAP" id="MF_01371_B">
    <property type="entry name" value="Ribosomal_uL30_B"/>
    <property type="match status" value="1"/>
</dbReference>
<dbReference type="InterPro" id="IPR036919">
    <property type="entry name" value="Ribo_uL30_ferredoxin-like_sf"/>
</dbReference>
<dbReference type="InterPro" id="IPR005996">
    <property type="entry name" value="Ribosomal_uL30_bac-type"/>
</dbReference>
<dbReference type="InterPro" id="IPR016082">
    <property type="entry name" value="Ribosomal_uL30_ferredoxin-like"/>
</dbReference>
<dbReference type="NCBIfam" id="TIGR01308">
    <property type="entry name" value="rpmD_bact"/>
    <property type="match status" value="1"/>
</dbReference>
<dbReference type="PANTHER" id="PTHR15892:SF2">
    <property type="entry name" value="LARGE RIBOSOMAL SUBUNIT PROTEIN UL30M"/>
    <property type="match status" value="1"/>
</dbReference>
<dbReference type="PANTHER" id="PTHR15892">
    <property type="entry name" value="MITOCHONDRIAL RIBOSOMAL PROTEIN L30"/>
    <property type="match status" value="1"/>
</dbReference>
<dbReference type="Pfam" id="PF00327">
    <property type="entry name" value="Ribosomal_L30"/>
    <property type="match status" value="1"/>
</dbReference>
<dbReference type="PIRSF" id="PIRSF002211">
    <property type="entry name" value="Ribosomal_L30_bac-type"/>
    <property type="match status" value="1"/>
</dbReference>
<dbReference type="SUPFAM" id="SSF55129">
    <property type="entry name" value="Ribosomal protein L30p/L7e"/>
    <property type="match status" value="1"/>
</dbReference>
<protein>
    <recommendedName>
        <fullName evidence="1">Large ribosomal subunit protein uL30</fullName>
    </recommendedName>
    <alternativeName>
        <fullName evidence="2">50S ribosomal protein L30</fullName>
    </alternativeName>
</protein>